<keyword id="KW-0021">Allosteric enzyme</keyword>
<keyword id="KW-0328">Glycosyltransferase</keyword>
<keyword id="KW-0342">GTP-binding</keyword>
<keyword id="KW-0460">Magnesium</keyword>
<keyword id="KW-0547">Nucleotide-binding</keyword>
<keyword id="KW-1185">Reference proteome</keyword>
<keyword id="KW-0808">Transferase</keyword>
<organism>
    <name type="scientific">Yersinia pestis</name>
    <dbReference type="NCBI Taxonomy" id="632"/>
    <lineage>
        <taxon>Bacteria</taxon>
        <taxon>Pseudomonadati</taxon>
        <taxon>Pseudomonadota</taxon>
        <taxon>Gammaproteobacteria</taxon>
        <taxon>Enterobacterales</taxon>
        <taxon>Yersiniaceae</taxon>
        <taxon>Yersinia</taxon>
    </lineage>
</organism>
<proteinExistence type="inferred from homology"/>
<dbReference type="EC" id="2.4.2.9" evidence="1"/>
<dbReference type="EMBL" id="AL590842">
    <property type="protein sequence ID" value="CAL21440.1"/>
    <property type="molecule type" value="Genomic_DNA"/>
</dbReference>
<dbReference type="EMBL" id="AE009952">
    <property type="protein sequence ID" value="AAM84980.1"/>
    <property type="status" value="ALT_INIT"/>
    <property type="molecule type" value="Genomic_DNA"/>
</dbReference>
<dbReference type="EMBL" id="AE017042">
    <property type="protein sequence ID" value="AAS62885.1"/>
    <property type="status" value="ALT_INIT"/>
    <property type="molecule type" value="Genomic_DNA"/>
</dbReference>
<dbReference type="PIR" id="AE0344">
    <property type="entry name" value="AE0344"/>
</dbReference>
<dbReference type="RefSeq" id="WP_002209776.1">
    <property type="nucleotide sequence ID" value="NZ_WUCM01000037.1"/>
</dbReference>
<dbReference type="RefSeq" id="YP_002347767.1">
    <property type="nucleotide sequence ID" value="NC_003143.1"/>
</dbReference>
<dbReference type="SMR" id="Q8ZCX9"/>
<dbReference type="STRING" id="214092.YPO2827"/>
<dbReference type="PaxDb" id="214092-YPO2827"/>
<dbReference type="EnsemblBacteria" id="AAS62885">
    <property type="protein sequence ID" value="AAS62885"/>
    <property type="gene ID" value="YP_2695"/>
</dbReference>
<dbReference type="GeneID" id="96666287"/>
<dbReference type="KEGG" id="ype:YPO2827"/>
<dbReference type="KEGG" id="ypk:y1408"/>
<dbReference type="KEGG" id="ypm:YP_2695"/>
<dbReference type="PATRIC" id="fig|214092.21.peg.3271"/>
<dbReference type="eggNOG" id="COG0035">
    <property type="taxonomic scope" value="Bacteria"/>
</dbReference>
<dbReference type="HOGENOM" id="CLU_067096_2_2_6"/>
<dbReference type="OMA" id="KHKIGLM"/>
<dbReference type="OrthoDB" id="9781675at2"/>
<dbReference type="UniPathway" id="UPA00574">
    <property type="reaction ID" value="UER00636"/>
</dbReference>
<dbReference type="Proteomes" id="UP000000815">
    <property type="component" value="Chromosome"/>
</dbReference>
<dbReference type="Proteomes" id="UP000001019">
    <property type="component" value="Chromosome"/>
</dbReference>
<dbReference type="Proteomes" id="UP000002490">
    <property type="component" value="Chromosome"/>
</dbReference>
<dbReference type="GO" id="GO:0005737">
    <property type="term" value="C:cytoplasm"/>
    <property type="evidence" value="ECO:0000318"/>
    <property type="project" value="GO_Central"/>
</dbReference>
<dbReference type="GO" id="GO:0005829">
    <property type="term" value="C:cytosol"/>
    <property type="evidence" value="ECO:0000318"/>
    <property type="project" value="GO_Central"/>
</dbReference>
<dbReference type="GO" id="GO:0005525">
    <property type="term" value="F:GTP binding"/>
    <property type="evidence" value="ECO:0007669"/>
    <property type="project" value="UniProtKB-KW"/>
</dbReference>
<dbReference type="GO" id="GO:0000287">
    <property type="term" value="F:magnesium ion binding"/>
    <property type="evidence" value="ECO:0007669"/>
    <property type="project" value="UniProtKB-UniRule"/>
</dbReference>
<dbReference type="GO" id="GO:0004845">
    <property type="term" value="F:uracil phosphoribosyltransferase activity"/>
    <property type="evidence" value="ECO:0000318"/>
    <property type="project" value="GO_Central"/>
</dbReference>
<dbReference type="GO" id="GO:0044206">
    <property type="term" value="P:UMP salvage"/>
    <property type="evidence" value="ECO:0007669"/>
    <property type="project" value="UniProtKB-UniRule"/>
</dbReference>
<dbReference type="GO" id="GO:0006223">
    <property type="term" value="P:uracil salvage"/>
    <property type="evidence" value="ECO:0007669"/>
    <property type="project" value="InterPro"/>
</dbReference>
<dbReference type="CDD" id="cd06223">
    <property type="entry name" value="PRTases_typeI"/>
    <property type="match status" value="1"/>
</dbReference>
<dbReference type="FunFam" id="3.40.50.2020:FF:000003">
    <property type="entry name" value="Uracil phosphoribosyltransferase"/>
    <property type="match status" value="1"/>
</dbReference>
<dbReference type="Gene3D" id="3.40.50.2020">
    <property type="match status" value="1"/>
</dbReference>
<dbReference type="HAMAP" id="MF_01218_B">
    <property type="entry name" value="Upp_B"/>
    <property type="match status" value="1"/>
</dbReference>
<dbReference type="InterPro" id="IPR000836">
    <property type="entry name" value="PRibTrfase_dom"/>
</dbReference>
<dbReference type="InterPro" id="IPR029057">
    <property type="entry name" value="PRTase-like"/>
</dbReference>
<dbReference type="InterPro" id="IPR034332">
    <property type="entry name" value="Upp_B"/>
</dbReference>
<dbReference type="InterPro" id="IPR050054">
    <property type="entry name" value="UPRTase/APRTase"/>
</dbReference>
<dbReference type="InterPro" id="IPR005765">
    <property type="entry name" value="Ura_phspho_trans"/>
</dbReference>
<dbReference type="NCBIfam" id="NF001097">
    <property type="entry name" value="PRK00129.1"/>
    <property type="match status" value="1"/>
</dbReference>
<dbReference type="NCBIfam" id="TIGR01091">
    <property type="entry name" value="upp"/>
    <property type="match status" value="1"/>
</dbReference>
<dbReference type="PANTHER" id="PTHR32315">
    <property type="entry name" value="ADENINE PHOSPHORIBOSYLTRANSFERASE"/>
    <property type="match status" value="1"/>
</dbReference>
<dbReference type="PANTHER" id="PTHR32315:SF4">
    <property type="entry name" value="URACIL PHOSPHORIBOSYLTRANSFERASE, CHLOROPLASTIC"/>
    <property type="match status" value="1"/>
</dbReference>
<dbReference type="Pfam" id="PF14681">
    <property type="entry name" value="UPRTase"/>
    <property type="match status" value="1"/>
</dbReference>
<dbReference type="SUPFAM" id="SSF53271">
    <property type="entry name" value="PRTase-like"/>
    <property type="match status" value="1"/>
</dbReference>
<gene>
    <name evidence="1" type="primary">upp</name>
    <name type="ordered locus">YPO2827</name>
    <name type="ordered locus">y1408</name>
    <name type="ordered locus">YP_2695</name>
</gene>
<name>UPP_YERPE</name>
<reference key="1">
    <citation type="journal article" date="2001" name="Nature">
        <title>Genome sequence of Yersinia pestis, the causative agent of plague.</title>
        <authorList>
            <person name="Parkhill J."/>
            <person name="Wren B.W."/>
            <person name="Thomson N.R."/>
            <person name="Titball R.W."/>
            <person name="Holden M.T.G."/>
            <person name="Prentice M.B."/>
            <person name="Sebaihia M."/>
            <person name="James K.D."/>
            <person name="Churcher C.M."/>
            <person name="Mungall K.L."/>
            <person name="Baker S."/>
            <person name="Basham D."/>
            <person name="Bentley S.D."/>
            <person name="Brooks K."/>
            <person name="Cerdeno-Tarraga A.-M."/>
            <person name="Chillingworth T."/>
            <person name="Cronin A."/>
            <person name="Davies R.M."/>
            <person name="Davis P."/>
            <person name="Dougan G."/>
            <person name="Feltwell T."/>
            <person name="Hamlin N."/>
            <person name="Holroyd S."/>
            <person name="Jagels K."/>
            <person name="Karlyshev A.V."/>
            <person name="Leather S."/>
            <person name="Moule S."/>
            <person name="Oyston P.C.F."/>
            <person name="Quail M.A."/>
            <person name="Rutherford K.M."/>
            <person name="Simmonds M."/>
            <person name="Skelton J."/>
            <person name="Stevens K."/>
            <person name="Whitehead S."/>
            <person name="Barrell B.G."/>
        </authorList>
    </citation>
    <scope>NUCLEOTIDE SEQUENCE [LARGE SCALE GENOMIC DNA]</scope>
    <source>
        <strain>CO-92 / Biovar Orientalis</strain>
    </source>
</reference>
<reference key="2">
    <citation type="journal article" date="2002" name="J. Bacteriol.">
        <title>Genome sequence of Yersinia pestis KIM.</title>
        <authorList>
            <person name="Deng W."/>
            <person name="Burland V."/>
            <person name="Plunkett G. III"/>
            <person name="Boutin A."/>
            <person name="Mayhew G.F."/>
            <person name="Liss P."/>
            <person name="Perna N.T."/>
            <person name="Rose D.J."/>
            <person name="Mau B."/>
            <person name="Zhou S."/>
            <person name="Schwartz D.C."/>
            <person name="Fetherston J.D."/>
            <person name="Lindler L.E."/>
            <person name="Brubaker R.R."/>
            <person name="Plano G.V."/>
            <person name="Straley S.C."/>
            <person name="McDonough K.A."/>
            <person name="Nilles M.L."/>
            <person name="Matson J.S."/>
            <person name="Blattner F.R."/>
            <person name="Perry R.D."/>
        </authorList>
    </citation>
    <scope>NUCLEOTIDE SEQUENCE [LARGE SCALE GENOMIC DNA]</scope>
    <source>
        <strain>KIM10+ / Biovar Mediaevalis</strain>
    </source>
</reference>
<reference key="3">
    <citation type="journal article" date="2004" name="DNA Res.">
        <title>Complete genome sequence of Yersinia pestis strain 91001, an isolate avirulent to humans.</title>
        <authorList>
            <person name="Song Y."/>
            <person name="Tong Z."/>
            <person name="Wang J."/>
            <person name="Wang L."/>
            <person name="Guo Z."/>
            <person name="Han Y."/>
            <person name="Zhang J."/>
            <person name="Pei D."/>
            <person name="Zhou D."/>
            <person name="Qin H."/>
            <person name="Pang X."/>
            <person name="Han Y."/>
            <person name="Zhai J."/>
            <person name="Li M."/>
            <person name="Cui B."/>
            <person name="Qi Z."/>
            <person name="Jin L."/>
            <person name="Dai R."/>
            <person name="Chen F."/>
            <person name="Li S."/>
            <person name="Ye C."/>
            <person name="Du Z."/>
            <person name="Lin W."/>
            <person name="Wang J."/>
            <person name="Yu J."/>
            <person name="Yang H."/>
            <person name="Wang J."/>
            <person name="Huang P."/>
            <person name="Yang R."/>
        </authorList>
    </citation>
    <scope>NUCLEOTIDE SEQUENCE [LARGE SCALE GENOMIC DNA]</scope>
    <source>
        <strain>91001 / Biovar Mediaevalis</strain>
    </source>
</reference>
<comment type="function">
    <text evidence="1">Catalyzes the conversion of uracil and 5-phospho-alpha-D-ribose 1-diphosphate (PRPP) to UMP and diphosphate.</text>
</comment>
<comment type="catalytic activity">
    <reaction evidence="1">
        <text>UMP + diphosphate = 5-phospho-alpha-D-ribose 1-diphosphate + uracil</text>
        <dbReference type="Rhea" id="RHEA:13017"/>
        <dbReference type="ChEBI" id="CHEBI:17568"/>
        <dbReference type="ChEBI" id="CHEBI:33019"/>
        <dbReference type="ChEBI" id="CHEBI:57865"/>
        <dbReference type="ChEBI" id="CHEBI:58017"/>
        <dbReference type="EC" id="2.4.2.9"/>
    </reaction>
</comment>
<comment type="cofactor">
    <cofactor evidence="1">
        <name>Mg(2+)</name>
        <dbReference type="ChEBI" id="CHEBI:18420"/>
    </cofactor>
    <text evidence="1">Binds 1 Mg(2+) ion per subunit. The magnesium is bound as Mg-PRPP.</text>
</comment>
<comment type="activity regulation">
    <text evidence="1">Allosterically activated by GTP.</text>
</comment>
<comment type="pathway">
    <text evidence="1">Pyrimidine metabolism; UMP biosynthesis via salvage pathway; UMP from uracil: step 1/1.</text>
</comment>
<comment type="similarity">
    <text evidence="1">Belongs to the UPRTase family.</text>
</comment>
<comment type="sequence caution" evidence="2">
    <conflict type="erroneous initiation">
        <sequence resource="EMBL-CDS" id="AAM84980"/>
    </conflict>
</comment>
<comment type="sequence caution" evidence="2">
    <conflict type="erroneous initiation">
        <sequence resource="EMBL-CDS" id="AAS62885"/>
    </conflict>
</comment>
<protein>
    <recommendedName>
        <fullName evidence="1">Uracil phosphoribosyltransferase</fullName>
        <ecNumber evidence="1">2.4.2.9</ecNumber>
    </recommendedName>
    <alternativeName>
        <fullName evidence="1">UMP pyrophosphorylase</fullName>
    </alternativeName>
    <alternativeName>
        <fullName evidence="1">UPRTase</fullName>
    </alternativeName>
</protein>
<accession>Q8ZCX9</accession>
<accession>Q0WD71</accession>
<evidence type="ECO:0000255" key="1">
    <source>
        <dbReference type="HAMAP-Rule" id="MF_01218"/>
    </source>
</evidence>
<evidence type="ECO:0000305" key="2"/>
<sequence>MKIVEVKHPLVKHKLGLMRENDISTKRFRELASEVGSLLTYVATADLETETVTIEGWNGPVEIEQIKGKKITVVPILRAGLGMMEGVLENVPSARISVVGVYRDEETLKPVPYFQKLVSNINERMALVVDPMLATGGSMIATIDLLKKAGCQSIKVLVLVAAPEGIKALEEAHPDVELYTASIDQGLNEHGYIIPGLGDAGDKIFGTK</sequence>
<feature type="chain" id="PRO_0000120915" description="Uracil phosphoribosyltransferase">
    <location>
        <begin position="1"/>
        <end position="208"/>
    </location>
</feature>
<feature type="binding site" evidence="1">
    <location>
        <position position="78"/>
    </location>
    <ligand>
        <name>5-phospho-alpha-D-ribose 1-diphosphate</name>
        <dbReference type="ChEBI" id="CHEBI:58017"/>
    </ligand>
</feature>
<feature type="binding site" evidence="1">
    <location>
        <position position="103"/>
    </location>
    <ligand>
        <name>5-phospho-alpha-D-ribose 1-diphosphate</name>
        <dbReference type="ChEBI" id="CHEBI:58017"/>
    </ligand>
</feature>
<feature type="binding site" evidence="1">
    <location>
        <begin position="130"/>
        <end position="138"/>
    </location>
    <ligand>
        <name>5-phospho-alpha-D-ribose 1-diphosphate</name>
        <dbReference type="ChEBI" id="CHEBI:58017"/>
    </ligand>
</feature>
<feature type="binding site" evidence="1">
    <location>
        <position position="193"/>
    </location>
    <ligand>
        <name>uracil</name>
        <dbReference type="ChEBI" id="CHEBI:17568"/>
    </ligand>
</feature>
<feature type="binding site" evidence="1">
    <location>
        <begin position="198"/>
        <end position="200"/>
    </location>
    <ligand>
        <name>uracil</name>
        <dbReference type="ChEBI" id="CHEBI:17568"/>
    </ligand>
</feature>
<feature type="binding site" evidence="1">
    <location>
        <position position="199"/>
    </location>
    <ligand>
        <name>5-phospho-alpha-D-ribose 1-diphosphate</name>
        <dbReference type="ChEBI" id="CHEBI:58017"/>
    </ligand>
</feature>